<evidence type="ECO:0000255" key="1">
    <source>
        <dbReference type="HAMAP-Rule" id="MF_00274"/>
    </source>
</evidence>
<reference key="1">
    <citation type="journal article" date="2004" name="Environ. Microbiol.">
        <title>The genome of Desulfotalea psychrophila, a sulfate-reducing bacterium from permanently cold Arctic sediments.</title>
        <authorList>
            <person name="Rabus R."/>
            <person name="Ruepp A."/>
            <person name="Frickey T."/>
            <person name="Rattei T."/>
            <person name="Fartmann B."/>
            <person name="Stark M."/>
            <person name="Bauer M."/>
            <person name="Zibat A."/>
            <person name="Lombardot T."/>
            <person name="Becker I."/>
            <person name="Amann J."/>
            <person name="Gellner K."/>
            <person name="Teeling H."/>
            <person name="Leuschner W.D."/>
            <person name="Gloeckner F.-O."/>
            <person name="Lupas A.N."/>
            <person name="Amann R."/>
            <person name="Klenk H.-P."/>
        </authorList>
    </citation>
    <scope>NUCLEOTIDE SEQUENCE [LARGE SCALE GENOMIC DNA]</scope>
    <source>
        <strain>DSM 12343 / LSv54</strain>
    </source>
</reference>
<comment type="function">
    <text evidence="1">Binds to DNA and alters its conformation. May be involved in regulation of gene expression, nucleoid organization and DNA protection.</text>
</comment>
<comment type="subunit">
    <text evidence="1">Homodimer.</text>
</comment>
<comment type="subcellular location">
    <subcellularLocation>
        <location evidence="1">Cytoplasm</location>
        <location evidence="1">Nucleoid</location>
    </subcellularLocation>
</comment>
<comment type="similarity">
    <text evidence="1">Belongs to the YbaB/EbfC family.</text>
</comment>
<protein>
    <recommendedName>
        <fullName evidence="1">Nucleoid-associated protein DP1429</fullName>
    </recommendedName>
</protein>
<sequence>MDISKLMQQAKDMQGKMAAIQEDLAKKIITGSAGGGMVEVQVNGQGEILAIKIEDALINTDEKEMLQDLVTAATNDGLRRAKDLSKQEMGQLTGGMNLPDLTNFLS</sequence>
<name>Y1429_DESPS</name>
<gene>
    <name type="ordered locus">DP1429</name>
</gene>
<keyword id="KW-0963">Cytoplasm</keyword>
<keyword id="KW-0238">DNA-binding</keyword>
<keyword id="KW-1185">Reference proteome</keyword>
<accession>Q6ANB6</accession>
<feature type="chain" id="PRO_1000003737" description="Nucleoid-associated protein DP1429">
    <location>
        <begin position="1"/>
        <end position="106"/>
    </location>
</feature>
<organism>
    <name type="scientific">Desulfotalea psychrophila (strain LSv54 / DSM 12343)</name>
    <dbReference type="NCBI Taxonomy" id="177439"/>
    <lineage>
        <taxon>Bacteria</taxon>
        <taxon>Pseudomonadati</taxon>
        <taxon>Thermodesulfobacteriota</taxon>
        <taxon>Desulfobulbia</taxon>
        <taxon>Desulfobulbales</taxon>
        <taxon>Desulfocapsaceae</taxon>
        <taxon>Desulfotalea</taxon>
    </lineage>
</organism>
<proteinExistence type="inferred from homology"/>
<dbReference type="EMBL" id="CR522870">
    <property type="protein sequence ID" value="CAG36158.1"/>
    <property type="molecule type" value="Genomic_DNA"/>
</dbReference>
<dbReference type="RefSeq" id="WP_011188670.1">
    <property type="nucleotide sequence ID" value="NC_006138.1"/>
</dbReference>
<dbReference type="SMR" id="Q6ANB6"/>
<dbReference type="STRING" id="177439.DP1429"/>
<dbReference type="KEGG" id="dps:DP1429"/>
<dbReference type="eggNOG" id="COG0718">
    <property type="taxonomic scope" value="Bacteria"/>
</dbReference>
<dbReference type="HOGENOM" id="CLU_140930_2_2_7"/>
<dbReference type="OrthoDB" id="9803080at2"/>
<dbReference type="Proteomes" id="UP000000602">
    <property type="component" value="Chromosome"/>
</dbReference>
<dbReference type="GO" id="GO:0043590">
    <property type="term" value="C:bacterial nucleoid"/>
    <property type="evidence" value="ECO:0007669"/>
    <property type="project" value="UniProtKB-UniRule"/>
</dbReference>
<dbReference type="GO" id="GO:0005829">
    <property type="term" value="C:cytosol"/>
    <property type="evidence" value="ECO:0007669"/>
    <property type="project" value="TreeGrafter"/>
</dbReference>
<dbReference type="GO" id="GO:0003677">
    <property type="term" value="F:DNA binding"/>
    <property type="evidence" value="ECO:0007669"/>
    <property type="project" value="UniProtKB-UniRule"/>
</dbReference>
<dbReference type="Gene3D" id="3.30.1310.10">
    <property type="entry name" value="Nucleoid-associated protein YbaB-like domain"/>
    <property type="match status" value="1"/>
</dbReference>
<dbReference type="HAMAP" id="MF_00274">
    <property type="entry name" value="DNA_YbaB_EbfC"/>
    <property type="match status" value="1"/>
</dbReference>
<dbReference type="InterPro" id="IPR036894">
    <property type="entry name" value="YbaB-like_sf"/>
</dbReference>
<dbReference type="InterPro" id="IPR004401">
    <property type="entry name" value="YbaB/EbfC"/>
</dbReference>
<dbReference type="NCBIfam" id="TIGR00103">
    <property type="entry name" value="DNA_YbaB_EbfC"/>
    <property type="match status" value="1"/>
</dbReference>
<dbReference type="PANTHER" id="PTHR33449">
    <property type="entry name" value="NUCLEOID-ASSOCIATED PROTEIN YBAB"/>
    <property type="match status" value="1"/>
</dbReference>
<dbReference type="PANTHER" id="PTHR33449:SF1">
    <property type="entry name" value="NUCLEOID-ASSOCIATED PROTEIN YBAB"/>
    <property type="match status" value="1"/>
</dbReference>
<dbReference type="Pfam" id="PF02575">
    <property type="entry name" value="YbaB_DNA_bd"/>
    <property type="match status" value="1"/>
</dbReference>
<dbReference type="PIRSF" id="PIRSF004555">
    <property type="entry name" value="UCP004555"/>
    <property type="match status" value="1"/>
</dbReference>
<dbReference type="SUPFAM" id="SSF82607">
    <property type="entry name" value="YbaB-like"/>
    <property type="match status" value="1"/>
</dbReference>